<organism>
    <name type="scientific">Enterobacter sp. (strain 638)</name>
    <dbReference type="NCBI Taxonomy" id="399742"/>
    <lineage>
        <taxon>Bacteria</taxon>
        <taxon>Pseudomonadati</taxon>
        <taxon>Pseudomonadota</taxon>
        <taxon>Gammaproteobacteria</taxon>
        <taxon>Enterobacterales</taxon>
        <taxon>Enterobacteriaceae</taxon>
        <taxon>Enterobacter</taxon>
    </lineage>
</organism>
<keyword id="KW-0068">Autocatalytic cleavage</keyword>
<keyword id="KW-0227">DNA damage</keyword>
<keyword id="KW-0234">DNA repair</keyword>
<keyword id="KW-0235">DNA replication</keyword>
<keyword id="KW-0238">DNA-binding</keyword>
<keyword id="KW-0378">Hydrolase</keyword>
<keyword id="KW-0678">Repressor</keyword>
<keyword id="KW-0742">SOS response</keyword>
<keyword id="KW-0804">Transcription</keyword>
<keyword id="KW-0805">Transcription regulation</keyword>
<proteinExistence type="inferred from homology"/>
<feature type="chain" id="PRO_1000057130" description="LexA repressor">
    <location>
        <begin position="1"/>
        <end position="202"/>
    </location>
</feature>
<feature type="DNA-binding region" description="H-T-H motif" evidence="1">
    <location>
        <begin position="28"/>
        <end position="48"/>
    </location>
</feature>
<feature type="active site" description="For autocatalytic cleavage activity" evidence="1">
    <location>
        <position position="119"/>
    </location>
</feature>
<feature type="active site" description="For autocatalytic cleavage activity" evidence="1">
    <location>
        <position position="156"/>
    </location>
</feature>
<feature type="site" description="Cleavage; by autolysis" evidence="1">
    <location>
        <begin position="84"/>
        <end position="85"/>
    </location>
</feature>
<protein>
    <recommendedName>
        <fullName evidence="1">LexA repressor</fullName>
        <ecNumber evidence="1">3.4.21.88</ecNumber>
    </recommendedName>
</protein>
<sequence>MKALTARQQEVFDLIRDHISQTGMPPTRAEIAQRLGFRSPNAAEEHLKALARKGVLEIVSGASRGIRLLVEEETGIPLIGRVAAGEPLLAQQHIEGHYQVDPGMFKPSADFLLRVSGMSMKDIGILDGDLLAVHKTQDVRNGQVVVARIDDEVTVKRLKKQGNTVQLLPENSEFSPIVVDLREQTFSIEGLAVGVIRNGEWL</sequence>
<reference key="1">
    <citation type="journal article" date="2010" name="PLoS Genet.">
        <title>Genome sequence of the plant growth promoting endophytic bacterium Enterobacter sp. 638.</title>
        <authorList>
            <person name="Taghavi S."/>
            <person name="van der Lelie D."/>
            <person name="Hoffman A."/>
            <person name="Zhang Y.B."/>
            <person name="Walla M.D."/>
            <person name="Vangronsveld J."/>
            <person name="Newman L."/>
            <person name="Monchy S."/>
        </authorList>
    </citation>
    <scope>NUCLEOTIDE SEQUENCE [LARGE SCALE GENOMIC DNA]</scope>
    <source>
        <strain>638</strain>
    </source>
</reference>
<name>LEXA_ENT38</name>
<evidence type="ECO:0000255" key="1">
    <source>
        <dbReference type="HAMAP-Rule" id="MF_00015"/>
    </source>
</evidence>
<dbReference type="EC" id="3.4.21.88" evidence="1"/>
<dbReference type="EMBL" id="CP000653">
    <property type="protein sequence ID" value="ABP58936.1"/>
    <property type="molecule type" value="Genomic_DNA"/>
</dbReference>
<dbReference type="RefSeq" id="WP_011915509.1">
    <property type="nucleotide sequence ID" value="NC_009436.1"/>
</dbReference>
<dbReference type="SMR" id="A4W5F6"/>
<dbReference type="STRING" id="399742.Ent638_0247"/>
<dbReference type="MEROPS" id="S24.001"/>
<dbReference type="GeneID" id="93307429"/>
<dbReference type="KEGG" id="ent:Ent638_0247"/>
<dbReference type="eggNOG" id="COG1974">
    <property type="taxonomic scope" value="Bacteria"/>
</dbReference>
<dbReference type="HOGENOM" id="CLU_066192_45_3_6"/>
<dbReference type="OrthoDB" id="9802364at2"/>
<dbReference type="Proteomes" id="UP000000230">
    <property type="component" value="Chromosome"/>
</dbReference>
<dbReference type="GO" id="GO:0003677">
    <property type="term" value="F:DNA binding"/>
    <property type="evidence" value="ECO:0007669"/>
    <property type="project" value="UniProtKB-UniRule"/>
</dbReference>
<dbReference type="GO" id="GO:0004252">
    <property type="term" value="F:serine-type endopeptidase activity"/>
    <property type="evidence" value="ECO:0007669"/>
    <property type="project" value="UniProtKB-UniRule"/>
</dbReference>
<dbReference type="GO" id="GO:0006281">
    <property type="term" value="P:DNA repair"/>
    <property type="evidence" value="ECO:0007669"/>
    <property type="project" value="UniProtKB-UniRule"/>
</dbReference>
<dbReference type="GO" id="GO:0006260">
    <property type="term" value="P:DNA replication"/>
    <property type="evidence" value="ECO:0007669"/>
    <property type="project" value="UniProtKB-UniRule"/>
</dbReference>
<dbReference type="GO" id="GO:0045892">
    <property type="term" value="P:negative regulation of DNA-templated transcription"/>
    <property type="evidence" value="ECO:0007669"/>
    <property type="project" value="UniProtKB-UniRule"/>
</dbReference>
<dbReference type="GO" id="GO:0006508">
    <property type="term" value="P:proteolysis"/>
    <property type="evidence" value="ECO:0007669"/>
    <property type="project" value="InterPro"/>
</dbReference>
<dbReference type="GO" id="GO:0009432">
    <property type="term" value="P:SOS response"/>
    <property type="evidence" value="ECO:0007669"/>
    <property type="project" value="UniProtKB-UniRule"/>
</dbReference>
<dbReference type="CDD" id="cd06529">
    <property type="entry name" value="S24_LexA-like"/>
    <property type="match status" value="1"/>
</dbReference>
<dbReference type="FunFam" id="1.10.10.10:FF:000009">
    <property type="entry name" value="LexA repressor"/>
    <property type="match status" value="1"/>
</dbReference>
<dbReference type="FunFam" id="2.10.109.10:FF:000001">
    <property type="entry name" value="LexA repressor"/>
    <property type="match status" value="1"/>
</dbReference>
<dbReference type="Gene3D" id="2.10.109.10">
    <property type="entry name" value="Umud Fragment, subunit A"/>
    <property type="match status" value="1"/>
</dbReference>
<dbReference type="Gene3D" id="1.10.10.10">
    <property type="entry name" value="Winged helix-like DNA-binding domain superfamily/Winged helix DNA-binding domain"/>
    <property type="match status" value="1"/>
</dbReference>
<dbReference type="HAMAP" id="MF_00015">
    <property type="entry name" value="LexA"/>
    <property type="match status" value="1"/>
</dbReference>
<dbReference type="InterPro" id="IPR006200">
    <property type="entry name" value="LexA"/>
</dbReference>
<dbReference type="InterPro" id="IPR039418">
    <property type="entry name" value="LexA-like"/>
</dbReference>
<dbReference type="InterPro" id="IPR036286">
    <property type="entry name" value="LexA/Signal_pep-like_sf"/>
</dbReference>
<dbReference type="InterPro" id="IPR006199">
    <property type="entry name" value="LexA_DNA-bd_dom"/>
</dbReference>
<dbReference type="InterPro" id="IPR050077">
    <property type="entry name" value="LexA_repressor"/>
</dbReference>
<dbReference type="InterPro" id="IPR006197">
    <property type="entry name" value="Peptidase_S24_LexA"/>
</dbReference>
<dbReference type="InterPro" id="IPR015927">
    <property type="entry name" value="Peptidase_S24_S26A/B/C"/>
</dbReference>
<dbReference type="InterPro" id="IPR036388">
    <property type="entry name" value="WH-like_DNA-bd_sf"/>
</dbReference>
<dbReference type="InterPro" id="IPR036390">
    <property type="entry name" value="WH_DNA-bd_sf"/>
</dbReference>
<dbReference type="NCBIfam" id="TIGR00498">
    <property type="entry name" value="lexA"/>
    <property type="match status" value="1"/>
</dbReference>
<dbReference type="PANTHER" id="PTHR33516">
    <property type="entry name" value="LEXA REPRESSOR"/>
    <property type="match status" value="1"/>
</dbReference>
<dbReference type="PANTHER" id="PTHR33516:SF2">
    <property type="entry name" value="LEXA REPRESSOR-RELATED"/>
    <property type="match status" value="1"/>
</dbReference>
<dbReference type="Pfam" id="PF01726">
    <property type="entry name" value="LexA_DNA_bind"/>
    <property type="match status" value="1"/>
</dbReference>
<dbReference type="Pfam" id="PF00717">
    <property type="entry name" value="Peptidase_S24"/>
    <property type="match status" value="1"/>
</dbReference>
<dbReference type="PRINTS" id="PR00726">
    <property type="entry name" value="LEXASERPTASE"/>
</dbReference>
<dbReference type="SUPFAM" id="SSF51306">
    <property type="entry name" value="LexA/Signal peptidase"/>
    <property type="match status" value="1"/>
</dbReference>
<dbReference type="SUPFAM" id="SSF46785">
    <property type="entry name" value="Winged helix' DNA-binding domain"/>
    <property type="match status" value="1"/>
</dbReference>
<comment type="function">
    <text evidence="1">Represses a number of genes involved in the response to DNA damage (SOS response), including recA and lexA. Binds to the 16 bp palindromic sequence 5'-CTGTATATATATACAG-3'. In the presence of single-stranded DNA, RecA interacts with LexA causing an autocatalytic cleavage which disrupts the DNA-binding part of LexA, leading to derepression of the SOS regulon and eventually DNA repair.</text>
</comment>
<comment type="catalytic activity">
    <reaction evidence="1">
        <text>Hydrolysis of Ala-|-Gly bond in repressor LexA.</text>
        <dbReference type="EC" id="3.4.21.88"/>
    </reaction>
</comment>
<comment type="subunit">
    <text evidence="1">Homodimer.</text>
</comment>
<comment type="similarity">
    <text evidence="1">Belongs to the peptidase S24 family.</text>
</comment>
<gene>
    <name evidence="1" type="primary">lexA</name>
    <name type="ordered locus">Ent638_0247</name>
</gene>
<accession>A4W5F6</accession>